<sequence length="354" mass="39999">MSSAIVVSQDAESLGLQIYSRKEKSLGVLVSNFLRLYNRDDVDLIGLDDAAGQLGVERRRIYDVVNILESIGIVARRGKNQYSWKGFGEIPRSLDELKEEGMRERLGYSSSNNSDKVSNGCEREEPLTLTPDDQENSSSSKMDQKKEKSLWLLAQNFVKMFLCSDDDLITLDSAAKALLSDSPDSVHMRTKVRRLYDIANVFASMNLIEKTHIPVTRKPAYRWLGSKSIAERGLSLFNSGEPKRVFGTEITNLRAKRNKTYCSSIRKQIGYKKHDEENTEQESKPAASKYVFGPFSPIGASKTNNDKVGKGRLLEIEALASTYQPQYCNQEITGLLGHFTEAWKKWYAEVDRNK</sequence>
<gene>
    <name type="primary">E2FF</name>
    <name type="synonym">DEL3</name>
    <name type="synonym">E2L2</name>
    <name type="synonym">ELP1</name>
    <name type="ordered locus">At3g01330</name>
    <name type="ORF">T22N4.4</name>
</gene>
<proteinExistence type="evidence at transcript level"/>
<reference key="1">
    <citation type="journal article" date="2002" name="J. Biol. Chem.">
        <title>E2Ls, E2F-like repressors of Arabidopsis that bind to E2F sites in a monomeric form.</title>
        <authorList>
            <person name="Kosugi S."/>
            <person name="Ohashi Y."/>
        </authorList>
    </citation>
    <scope>NUCLEOTIDE SEQUENCE [MRNA]</scope>
    <scope>FUNCTION</scope>
    <scope>SUBCELLULAR LOCATION</scope>
    <scope>TISSUE SPECIFICITY</scope>
</reference>
<reference key="2">
    <citation type="journal article" date="2000" name="Nature">
        <title>Sequence and analysis of chromosome 3 of the plant Arabidopsis thaliana.</title>
        <authorList>
            <person name="Salanoubat M."/>
            <person name="Lemcke K."/>
            <person name="Rieger M."/>
            <person name="Ansorge W."/>
            <person name="Unseld M."/>
            <person name="Fartmann B."/>
            <person name="Valle G."/>
            <person name="Bloecker H."/>
            <person name="Perez-Alonso M."/>
            <person name="Obermaier B."/>
            <person name="Delseny M."/>
            <person name="Boutry M."/>
            <person name="Grivell L.A."/>
            <person name="Mache R."/>
            <person name="Puigdomenech P."/>
            <person name="De Simone V."/>
            <person name="Choisne N."/>
            <person name="Artiguenave F."/>
            <person name="Robert C."/>
            <person name="Brottier P."/>
            <person name="Wincker P."/>
            <person name="Cattolico L."/>
            <person name="Weissenbach J."/>
            <person name="Saurin W."/>
            <person name="Quetier F."/>
            <person name="Schaefer M."/>
            <person name="Mueller-Auer S."/>
            <person name="Gabel C."/>
            <person name="Fuchs M."/>
            <person name="Benes V."/>
            <person name="Wurmbach E."/>
            <person name="Drzonek H."/>
            <person name="Erfle H."/>
            <person name="Jordan N."/>
            <person name="Bangert S."/>
            <person name="Wiedelmann R."/>
            <person name="Kranz H."/>
            <person name="Voss H."/>
            <person name="Holland R."/>
            <person name="Brandt P."/>
            <person name="Nyakatura G."/>
            <person name="Vezzi A."/>
            <person name="D'Angelo M."/>
            <person name="Pallavicini A."/>
            <person name="Toppo S."/>
            <person name="Simionati B."/>
            <person name="Conrad A."/>
            <person name="Hornischer K."/>
            <person name="Kauer G."/>
            <person name="Loehnert T.-H."/>
            <person name="Nordsiek G."/>
            <person name="Reichelt J."/>
            <person name="Scharfe M."/>
            <person name="Schoen O."/>
            <person name="Bargues M."/>
            <person name="Terol J."/>
            <person name="Climent J."/>
            <person name="Navarro P."/>
            <person name="Collado C."/>
            <person name="Perez-Perez A."/>
            <person name="Ottenwaelder B."/>
            <person name="Duchemin D."/>
            <person name="Cooke R."/>
            <person name="Laudie M."/>
            <person name="Berger-Llauro C."/>
            <person name="Purnelle B."/>
            <person name="Masuy D."/>
            <person name="de Haan M."/>
            <person name="Maarse A.C."/>
            <person name="Alcaraz J.-P."/>
            <person name="Cottet A."/>
            <person name="Casacuberta E."/>
            <person name="Monfort A."/>
            <person name="Argiriou A."/>
            <person name="Flores M."/>
            <person name="Liguori R."/>
            <person name="Vitale D."/>
            <person name="Mannhaupt G."/>
            <person name="Haase D."/>
            <person name="Schoof H."/>
            <person name="Rudd S."/>
            <person name="Zaccaria P."/>
            <person name="Mewes H.-W."/>
            <person name="Mayer K.F.X."/>
            <person name="Kaul S."/>
            <person name="Town C.D."/>
            <person name="Koo H.L."/>
            <person name="Tallon L.J."/>
            <person name="Jenkins J."/>
            <person name="Rooney T."/>
            <person name="Rizzo M."/>
            <person name="Walts A."/>
            <person name="Utterback T."/>
            <person name="Fujii C.Y."/>
            <person name="Shea T.P."/>
            <person name="Creasy T.H."/>
            <person name="Haas B."/>
            <person name="Maiti R."/>
            <person name="Wu D."/>
            <person name="Peterson J."/>
            <person name="Van Aken S."/>
            <person name="Pai G."/>
            <person name="Militscher J."/>
            <person name="Sellers P."/>
            <person name="Gill J.E."/>
            <person name="Feldblyum T.V."/>
            <person name="Preuss D."/>
            <person name="Lin X."/>
            <person name="Nierman W.C."/>
            <person name="Salzberg S.L."/>
            <person name="White O."/>
            <person name="Venter J.C."/>
            <person name="Fraser C.M."/>
            <person name="Kaneko T."/>
            <person name="Nakamura Y."/>
            <person name="Sato S."/>
            <person name="Kato T."/>
            <person name="Asamizu E."/>
            <person name="Sasamoto S."/>
            <person name="Kimura T."/>
            <person name="Idesawa K."/>
            <person name="Kawashima K."/>
            <person name="Kishida Y."/>
            <person name="Kiyokawa C."/>
            <person name="Kohara M."/>
            <person name="Matsumoto M."/>
            <person name="Matsuno A."/>
            <person name="Muraki A."/>
            <person name="Nakayama S."/>
            <person name="Nakazaki N."/>
            <person name="Shinpo S."/>
            <person name="Takeuchi C."/>
            <person name="Wada T."/>
            <person name="Watanabe A."/>
            <person name="Yamada M."/>
            <person name="Yasuda M."/>
            <person name="Tabata S."/>
        </authorList>
    </citation>
    <scope>NUCLEOTIDE SEQUENCE [LARGE SCALE GENOMIC DNA]</scope>
    <source>
        <strain>cv. Columbia</strain>
    </source>
</reference>
<reference key="3">
    <citation type="journal article" date="2017" name="Plant J.">
        <title>Araport11: a complete reannotation of the Arabidopsis thaliana reference genome.</title>
        <authorList>
            <person name="Cheng C.Y."/>
            <person name="Krishnakumar V."/>
            <person name="Chan A.P."/>
            <person name="Thibaud-Nissen F."/>
            <person name="Schobel S."/>
            <person name="Town C.D."/>
        </authorList>
    </citation>
    <scope>GENOME REANNOTATION</scope>
    <source>
        <strain>cv. Columbia</strain>
    </source>
</reference>
<reference key="4">
    <citation type="journal article" date="2003" name="Science">
        <title>Empirical analysis of transcriptional activity in the Arabidopsis genome.</title>
        <authorList>
            <person name="Yamada K."/>
            <person name="Lim J."/>
            <person name="Dale J.M."/>
            <person name="Chen H."/>
            <person name="Shinn P."/>
            <person name="Palm C.J."/>
            <person name="Southwick A.M."/>
            <person name="Wu H.C."/>
            <person name="Kim C.J."/>
            <person name="Nguyen M."/>
            <person name="Pham P.K."/>
            <person name="Cheuk R.F."/>
            <person name="Karlin-Newmann G."/>
            <person name="Liu S.X."/>
            <person name="Lam B."/>
            <person name="Sakano H."/>
            <person name="Wu T."/>
            <person name="Yu G."/>
            <person name="Miranda M."/>
            <person name="Quach H.L."/>
            <person name="Tripp M."/>
            <person name="Chang C.H."/>
            <person name="Lee J.M."/>
            <person name="Toriumi M.J."/>
            <person name="Chan M.M."/>
            <person name="Tang C.C."/>
            <person name="Onodera C.S."/>
            <person name="Deng J.M."/>
            <person name="Akiyama K."/>
            <person name="Ansari Y."/>
            <person name="Arakawa T."/>
            <person name="Banh J."/>
            <person name="Banno F."/>
            <person name="Bowser L."/>
            <person name="Brooks S.Y."/>
            <person name="Carninci P."/>
            <person name="Chao Q."/>
            <person name="Choy N."/>
            <person name="Enju A."/>
            <person name="Goldsmith A.D."/>
            <person name="Gurjal M."/>
            <person name="Hansen N.F."/>
            <person name="Hayashizaki Y."/>
            <person name="Johnson-Hopson C."/>
            <person name="Hsuan V.W."/>
            <person name="Iida K."/>
            <person name="Karnes M."/>
            <person name="Khan S."/>
            <person name="Koesema E."/>
            <person name="Ishida J."/>
            <person name="Jiang P.X."/>
            <person name="Jones T."/>
            <person name="Kawai J."/>
            <person name="Kamiya A."/>
            <person name="Meyers C."/>
            <person name="Nakajima M."/>
            <person name="Narusaka M."/>
            <person name="Seki M."/>
            <person name="Sakurai T."/>
            <person name="Satou M."/>
            <person name="Tamse R."/>
            <person name="Vaysberg M."/>
            <person name="Wallender E.K."/>
            <person name="Wong C."/>
            <person name="Yamamura Y."/>
            <person name="Yuan S."/>
            <person name="Shinozaki K."/>
            <person name="Davis R.W."/>
            <person name="Theologis A."/>
            <person name="Ecker J.R."/>
        </authorList>
    </citation>
    <scope>NUCLEOTIDE SEQUENCE [LARGE SCALE MRNA]</scope>
    <source>
        <strain>cv. Columbia</strain>
    </source>
</reference>
<reference key="5">
    <citation type="journal article" date="2002" name="J. Biol. Chem.">
        <title>The E2F family of transcription factors from Arabidopsis thaliana. Novel and conserved components of the retinoblastoma/E2F pathway in plants.</title>
        <authorList>
            <person name="Mariconti L."/>
            <person name="Pellegrini B."/>
            <person name="Cantoni R."/>
            <person name="Stevens R."/>
            <person name="Bergounioux C."/>
            <person name="Cella R."/>
            <person name="Albani D."/>
        </authorList>
    </citation>
    <scope>FUNCTION</scope>
    <scope>DEVELOPMENTAL STAGE</scope>
    <scope>GENE FAMILY</scope>
    <scope>NOMENCLATURE</scope>
</reference>
<reference key="6">
    <citation type="journal article" date="2002" name="Plant Cell">
        <title>Genome-wide analysis of core cell cycle genes in Arabidopsis.</title>
        <authorList>
            <person name="Vandepoele K."/>
            <person name="Raes J."/>
            <person name="de Veylder L."/>
            <person name="Rouze P."/>
            <person name="Rombauts S."/>
            <person name="Inze D."/>
        </authorList>
    </citation>
    <scope>GENE FAMILY</scope>
    <scope>NOMENCLATURE</scope>
</reference>
<reference key="7">
    <citation type="journal article" date="2004" name="Plant Cell">
        <title>Role of an atypical E2F transcription factor in the control of Arabidopsis cell growth and differentiation.</title>
        <authorList>
            <person name="Ramirez-Parra E."/>
            <person name="Lopez-Matas M.A."/>
            <person name="Fruendt C."/>
            <person name="Gutierrez C."/>
        </authorList>
    </citation>
    <scope>FUNCTION</scope>
    <scope>DEVELOPMENTAL STAGE</scope>
    <scope>TISSUE SPECIFICITY</scope>
</reference>
<keyword id="KW-0131">Cell cycle</keyword>
<keyword id="KW-0963">Cytoplasm</keyword>
<keyword id="KW-0238">DNA-binding</keyword>
<keyword id="KW-0539">Nucleus</keyword>
<keyword id="KW-1185">Reference proteome</keyword>
<keyword id="KW-0678">Repressor</keyword>
<keyword id="KW-0804">Transcription</keyword>
<keyword id="KW-0805">Transcription regulation</keyword>
<accession>Q8RWL0</accession>
<accession>Q9SRI0</accession>
<comment type="function">
    <text evidence="2 3 4">Inhibitor of E2F-dependent activation of gene expression. Binds specifically the E2 recognition site without interacting with DP proteins and prevents transcription activation by E2F/DP heterodimers. Does not bind retinoblastoma-related proteins. Acts as a growth regulator but is not associated with changes in the expression of cell cycle marker genes or in nuclear ploidy levels. Has no effect on cell proliferation, but may repress cell wall biosynthesis genes during cell elongation in differentiated cells.</text>
</comment>
<comment type="subcellular location">
    <subcellularLocation>
        <location evidence="3">Nucleus</location>
    </subcellularLocation>
    <subcellularLocation>
        <location evidence="3">Cytoplasm</location>
    </subcellularLocation>
</comment>
<comment type="tissue specificity">
    <text evidence="3 4">High expression in young cotyledons and leaves, hypocotyls, shoot apical meristem, roots and mature pollen grains, moderate in developing trichomes, flowers and at early stages of developing anthers, and barely detectable in mature leaves. Not detected in primary root meristem, emerging lateral roots, pistils, developing embryos and siliques.</text>
</comment>
<comment type="developmental stage">
    <text evidence="2 4">Expressed in a cell cycle-dependent manner. Most abundant in mid-S phase.</text>
</comment>
<comment type="similarity">
    <text evidence="5">Belongs to the E2F/DP family.</text>
</comment>
<comment type="sequence caution" evidence="5">
    <conflict type="erroneous gene model prediction">
        <sequence resource="EMBL-CDS" id="AAF03493"/>
    </conflict>
</comment>
<organism>
    <name type="scientific">Arabidopsis thaliana</name>
    <name type="common">Mouse-ear cress</name>
    <dbReference type="NCBI Taxonomy" id="3702"/>
    <lineage>
        <taxon>Eukaryota</taxon>
        <taxon>Viridiplantae</taxon>
        <taxon>Streptophyta</taxon>
        <taxon>Embryophyta</taxon>
        <taxon>Tracheophyta</taxon>
        <taxon>Spermatophyta</taxon>
        <taxon>Magnoliopsida</taxon>
        <taxon>eudicotyledons</taxon>
        <taxon>Gunneridae</taxon>
        <taxon>Pentapetalae</taxon>
        <taxon>rosids</taxon>
        <taxon>malvids</taxon>
        <taxon>Brassicales</taxon>
        <taxon>Brassicaceae</taxon>
        <taxon>Camelineae</taxon>
        <taxon>Arabidopsis</taxon>
    </lineage>
</organism>
<evidence type="ECO:0000256" key="1">
    <source>
        <dbReference type="SAM" id="MobiDB-lite"/>
    </source>
</evidence>
<evidence type="ECO:0000269" key="2">
    <source>
    </source>
</evidence>
<evidence type="ECO:0000269" key="3">
    <source>
    </source>
</evidence>
<evidence type="ECO:0000269" key="4">
    <source>
    </source>
</evidence>
<evidence type="ECO:0000305" key="5"/>
<protein>
    <recommendedName>
        <fullName>E2F transcription factor-like E2FF</fullName>
    </recommendedName>
    <alternativeName>
        <fullName>DP-E2F-like protein 3</fullName>
    </alternativeName>
    <alternativeName>
        <fullName>E2F-like repressor E2L2</fullName>
    </alternativeName>
</protein>
<feature type="chain" id="PRO_0000406294" description="E2F transcription factor-like E2FF">
    <location>
        <begin position="1"/>
        <end position="354"/>
    </location>
</feature>
<feature type="DNA-binding region">
    <location>
        <begin position="21"/>
        <end position="86"/>
    </location>
</feature>
<feature type="DNA-binding region">
    <location>
        <begin position="145"/>
        <end position="225"/>
    </location>
</feature>
<feature type="region of interest" description="Disordered" evidence="1">
    <location>
        <begin position="104"/>
        <end position="143"/>
    </location>
</feature>
<feature type="compositionally biased region" description="Polar residues" evidence="1">
    <location>
        <begin position="108"/>
        <end position="117"/>
    </location>
</feature>
<name>E2FF_ARATH</name>
<dbReference type="EMBL" id="AB074532">
    <property type="protein sequence ID" value="BAB91413.1"/>
    <property type="molecule type" value="mRNA"/>
</dbReference>
<dbReference type="EMBL" id="AC010676">
    <property type="protein sequence ID" value="AAF03493.1"/>
    <property type="status" value="ALT_SEQ"/>
    <property type="molecule type" value="Genomic_DNA"/>
</dbReference>
<dbReference type="EMBL" id="CP002686">
    <property type="protein sequence ID" value="AEE73650.1"/>
    <property type="molecule type" value="Genomic_DNA"/>
</dbReference>
<dbReference type="EMBL" id="AY093024">
    <property type="protein sequence ID" value="AAM13023.1"/>
    <property type="molecule type" value="mRNA"/>
</dbReference>
<dbReference type="EMBL" id="BT000412">
    <property type="protein sequence ID" value="AAN15731.1"/>
    <property type="molecule type" value="mRNA"/>
</dbReference>
<dbReference type="RefSeq" id="NP_186782.2">
    <property type="nucleotide sequence ID" value="NM_110999.7"/>
</dbReference>
<dbReference type="SMR" id="Q8RWL0"/>
<dbReference type="BioGRID" id="6554">
    <property type="interactions" value="4"/>
</dbReference>
<dbReference type="FunCoup" id="Q8RWL0">
    <property type="interactions" value="16"/>
</dbReference>
<dbReference type="IntAct" id="Q8RWL0">
    <property type="interactions" value="1"/>
</dbReference>
<dbReference type="STRING" id="3702.Q8RWL0"/>
<dbReference type="iPTMnet" id="Q8RWL0"/>
<dbReference type="PaxDb" id="3702-AT3G01330.1"/>
<dbReference type="ProteomicsDB" id="222011"/>
<dbReference type="EnsemblPlants" id="AT3G01330.1">
    <property type="protein sequence ID" value="AT3G01330.1"/>
    <property type="gene ID" value="AT3G01330"/>
</dbReference>
<dbReference type="GeneID" id="821221"/>
<dbReference type="Gramene" id="AT3G01330.1">
    <property type="protein sequence ID" value="AT3G01330.1"/>
    <property type="gene ID" value="AT3G01330"/>
</dbReference>
<dbReference type="KEGG" id="ath:AT3G01330"/>
<dbReference type="Araport" id="AT3G01330"/>
<dbReference type="TAIR" id="AT3G01330">
    <property type="gene designation" value="DEL3"/>
</dbReference>
<dbReference type="eggNOG" id="KOG2578">
    <property type="taxonomic scope" value="Eukaryota"/>
</dbReference>
<dbReference type="HOGENOM" id="CLU_041969_1_0_1"/>
<dbReference type="InParanoid" id="Q8RWL0"/>
<dbReference type="OMA" id="EDSQWKN"/>
<dbReference type="OrthoDB" id="5318at2759"/>
<dbReference type="PhylomeDB" id="Q8RWL0"/>
<dbReference type="PRO" id="PR:Q8RWL0"/>
<dbReference type="Proteomes" id="UP000006548">
    <property type="component" value="Chromosome 3"/>
</dbReference>
<dbReference type="ExpressionAtlas" id="Q8RWL0">
    <property type="expression patterns" value="baseline and differential"/>
</dbReference>
<dbReference type="GO" id="GO:0005737">
    <property type="term" value="C:cytoplasm"/>
    <property type="evidence" value="ECO:0000314"/>
    <property type="project" value="TAIR"/>
</dbReference>
<dbReference type="GO" id="GO:0005634">
    <property type="term" value="C:nucleus"/>
    <property type="evidence" value="ECO:0000314"/>
    <property type="project" value="TAIR"/>
</dbReference>
<dbReference type="GO" id="GO:0005667">
    <property type="term" value="C:transcription regulator complex"/>
    <property type="evidence" value="ECO:0007669"/>
    <property type="project" value="InterPro"/>
</dbReference>
<dbReference type="GO" id="GO:0003677">
    <property type="term" value="F:DNA binding"/>
    <property type="evidence" value="ECO:0000314"/>
    <property type="project" value="TAIR"/>
</dbReference>
<dbReference type="GO" id="GO:0003700">
    <property type="term" value="F:DNA-binding transcription factor activity"/>
    <property type="evidence" value="ECO:0000250"/>
    <property type="project" value="TAIR"/>
</dbReference>
<dbReference type="GO" id="GO:0000978">
    <property type="term" value="F:RNA polymerase II cis-regulatory region sequence-specific DNA binding"/>
    <property type="evidence" value="ECO:0007669"/>
    <property type="project" value="InterPro"/>
</dbReference>
<dbReference type="GO" id="GO:0006357">
    <property type="term" value="P:regulation of transcription by RNA polymerase II"/>
    <property type="evidence" value="ECO:0007669"/>
    <property type="project" value="InterPro"/>
</dbReference>
<dbReference type="FunFam" id="1.10.10.10:FF:000073">
    <property type="entry name" value="E2F transcription factor 8"/>
    <property type="match status" value="1"/>
</dbReference>
<dbReference type="FunFam" id="1.10.10.10:FF:000295">
    <property type="entry name" value="E2F transcription factor-like E2FE"/>
    <property type="match status" value="1"/>
</dbReference>
<dbReference type="Gene3D" id="1.10.10.10">
    <property type="entry name" value="Winged helix-like DNA-binding domain superfamily/Winged helix DNA-binding domain"/>
    <property type="match status" value="2"/>
</dbReference>
<dbReference type="InterPro" id="IPR015633">
    <property type="entry name" value="E2F"/>
</dbReference>
<dbReference type="InterPro" id="IPR003316">
    <property type="entry name" value="E2F_WHTH_DNA-bd_dom"/>
</dbReference>
<dbReference type="InterPro" id="IPR036388">
    <property type="entry name" value="WH-like_DNA-bd_sf"/>
</dbReference>
<dbReference type="InterPro" id="IPR036390">
    <property type="entry name" value="WH_DNA-bd_sf"/>
</dbReference>
<dbReference type="PANTHER" id="PTHR12081">
    <property type="entry name" value="TRANSCRIPTION FACTOR E2F"/>
    <property type="match status" value="1"/>
</dbReference>
<dbReference type="PANTHER" id="PTHR12081:SF7">
    <property type="entry name" value="TRANSCRIPTION FACTOR EFL-3"/>
    <property type="match status" value="1"/>
</dbReference>
<dbReference type="Pfam" id="PF02319">
    <property type="entry name" value="E2F_TDP"/>
    <property type="match status" value="2"/>
</dbReference>
<dbReference type="SMART" id="SM01372">
    <property type="entry name" value="E2F_TDP"/>
    <property type="match status" value="2"/>
</dbReference>
<dbReference type="SUPFAM" id="SSF46785">
    <property type="entry name" value="Winged helix' DNA-binding domain"/>
    <property type="match status" value="2"/>
</dbReference>